<protein>
    <recommendedName>
        <fullName evidence="1">Orotate phosphoribosyltransferase</fullName>
        <shortName evidence="1">OPRT</shortName>
        <shortName evidence="1">OPRTase</shortName>
        <ecNumber evidence="1">2.4.2.10</ecNumber>
    </recommendedName>
</protein>
<comment type="function">
    <text evidence="1">Catalyzes the transfer of a ribosyl phosphate group from 5-phosphoribose 1-diphosphate to orotate, leading to the formation of orotidine monophosphate (OMP).</text>
</comment>
<comment type="catalytic activity">
    <reaction evidence="1">
        <text>orotidine 5'-phosphate + diphosphate = orotate + 5-phospho-alpha-D-ribose 1-diphosphate</text>
        <dbReference type="Rhea" id="RHEA:10380"/>
        <dbReference type="ChEBI" id="CHEBI:30839"/>
        <dbReference type="ChEBI" id="CHEBI:33019"/>
        <dbReference type="ChEBI" id="CHEBI:57538"/>
        <dbReference type="ChEBI" id="CHEBI:58017"/>
        <dbReference type="EC" id="2.4.2.10"/>
    </reaction>
</comment>
<comment type="cofactor">
    <cofactor evidence="1">
        <name>Mg(2+)</name>
        <dbReference type="ChEBI" id="CHEBI:18420"/>
    </cofactor>
</comment>
<comment type="pathway">
    <text evidence="1">Pyrimidine metabolism; UMP biosynthesis via de novo pathway; UMP from orotate: step 1/2.</text>
</comment>
<comment type="subunit">
    <text evidence="1">Homodimer.</text>
</comment>
<comment type="similarity">
    <text evidence="1">Belongs to the purine/pyrimidine phosphoribosyltransferase family. PyrE subfamily.</text>
</comment>
<keyword id="KW-0328">Glycosyltransferase</keyword>
<keyword id="KW-0460">Magnesium</keyword>
<keyword id="KW-0665">Pyrimidine biosynthesis</keyword>
<keyword id="KW-0808">Transferase</keyword>
<evidence type="ECO:0000255" key="1">
    <source>
        <dbReference type="HAMAP-Rule" id="MF_01208"/>
    </source>
</evidence>
<proteinExistence type="inferred from homology"/>
<sequence>MNKEAYIQMFKDTDALLEGHFLLSSGKHSAKYLQCAKVLQYPNLAEMICRDLAEYFKDQQIDVVIGPALGAVTLSYELARQLNCRSIFAEREDGIMKLRRGFKIEEGEKVLVVEDVITTGGSVKEIIEIVKEYKGEIVAVAGIVDRSGGKVGLGYPLKTLLTLNIETYEPDECPLCGEGIPIVKPGSRKVK</sequence>
<gene>
    <name evidence="1" type="primary">pyrE</name>
    <name type="ordered locus">Csac_1938</name>
</gene>
<accession>A4XKT8</accession>
<reference key="1">
    <citation type="submission" date="2007-04" db="EMBL/GenBank/DDBJ databases">
        <title>Genome sequence of the thermophilic hydrogen-producing bacterium Caldicellulosiruptor saccharolyticus DSM 8903.</title>
        <authorList>
            <person name="Copeland A."/>
            <person name="Lucas S."/>
            <person name="Lapidus A."/>
            <person name="Barry K."/>
            <person name="Detter J.C."/>
            <person name="Glavina del Rio T."/>
            <person name="Hammon N."/>
            <person name="Israni S."/>
            <person name="Dalin E."/>
            <person name="Tice H."/>
            <person name="Pitluck S."/>
            <person name="Kiss H."/>
            <person name="Brettin T."/>
            <person name="Bruce D."/>
            <person name="Han C."/>
            <person name="Schmutz J."/>
            <person name="Larimer F."/>
            <person name="Land M."/>
            <person name="Hauser L."/>
            <person name="Kyrpides N."/>
            <person name="Lykidis A."/>
            <person name="van de Werken H.J.G."/>
            <person name="Verhaart M.R.A."/>
            <person name="VanFossen A.L."/>
            <person name="Lewis D.L."/>
            <person name="Nichols J.D."/>
            <person name="Goorissen H.P."/>
            <person name="van Niel E.W.J."/>
            <person name="Stams F.J.M."/>
            <person name="Willquist K.U."/>
            <person name="Ward D.E."/>
            <person name="van der Oost J."/>
            <person name="Kelly R.M."/>
            <person name="Kengen S.M.W."/>
            <person name="Richardson P."/>
        </authorList>
    </citation>
    <scope>NUCLEOTIDE SEQUENCE [LARGE SCALE GENOMIC DNA]</scope>
    <source>
        <strain>ATCC 43494 / DSM 8903 / Tp8T 6331</strain>
    </source>
</reference>
<dbReference type="EC" id="2.4.2.10" evidence="1"/>
<dbReference type="EMBL" id="CP000679">
    <property type="protein sequence ID" value="ABP67523.1"/>
    <property type="molecule type" value="Genomic_DNA"/>
</dbReference>
<dbReference type="RefSeq" id="WP_011917459.1">
    <property type="nucleotide sequence ID" value="NC_009437.1"/>
</dbReference>
<dbReference type="SMR" id="A4XKT8"/>
<dbReference type="STRING" id="351627.Csac_1938"/>
<dbReference type="KEGG" id="csc:Csac_1938"/>
<dbReference type="eggNOG" id="COG0461">
    <property type="taxonomic scope" value="Bacteria"/>
</dbReference>
<dbReference type="HOGENOM" id="CLU_074878_3_0_9"/>
<dbReference type="OrthoDB" id="9783570at2"/>
<dbReference type="UniPathway" id="UPA00070">
    <property type="reaction ID" value="UER00119"/>
</dbReference>
<dbReference type="Proteomes" id="UP000000256">
    <property type="component" value="Chromosome"/>
</dbReference>
<dbReference type="GO" id="GO:0000287">
    <property type="term" value="F:magnesium ion binding"/>
    <property type="evidence" value="ECO:0007669"/>
    <property type="project" value="UniProtKB-UniRule"/>
</dbReference>
<dbReference type="GO" id="GO:0004588">
    <property type="term" value="F:orotate phosphoribosyltransferase activity"/>
    <property type="evidence" value="ECO:0007669"/>
    <property type="project" value="UniProtKB-UniRule"/>
</dbReference>
<dbReference type="GO" id="GO:0044205">
    <property type="term" value="P:'de novo' UMP biosynthetic process"/>
    <property type="evidence" value="ECO:0007669"/>
    <property type="project" value="UniProtKB-UniRule"/>
</dbReference>
<dbReference type="GO" id="GO:0019856">
    <property type="term" value="P:pyrimidine nucleobase biosynthetic process"/>
    <property type="evidence" value="ECO:0007669"/>
    <property type="project" value="InterPro"/>
</dbReference>
<dbReference type="CDD" id="cd06223">
    <property type="entry name" value="PRTases_typeI"/>
    <property type="match status" value="1"/>
</dbReference>
<dbReference type="Gene3D" id="3.40.50.2020">
    <property type="match status" value="1"/>
</dbReference>
<dbReference type="HAMAP" id="MF_01208">
    <property type="entry name" value="PyrE"/>
    <property type="match status" value="1"/>
</dbReference>
<dbReference type="InterPro" id="IPR023031">
    <property type="entry name" value="OPRT"/>
</dbReference>
<dbReference type="InterPro" id="IPR006273">
    <property type="entry name" value="Orotate_PRibTrfase_bac"/>
</dbReference>
<dbReference type="InterPro" id="IPR000836">
    <property type="entry name" value="PRibTrfase_dom"/>
</dbReference>
<dbReference type="InterPro" id="IPR029057">
    <property type="entry name" value="PRTase-like"/>
</dbReference>
<dbReference type="NCBIfam" id="TIGR01367">
    <property type="entry name" value="pyrE_Therm"/>
    <property type="match status" value="1"/>
</dbReference>
<dbReference type="PANTHER" id="PTHR19278">
    <property type="entry name" value="OROTATE PHOSPHORIBOSYLTRANSFERASE"/>
    <property type="match status" value="1"/>
</dbReference>
<dbReference type="PANTHER" id="PTHR19278:SF9">
    <property type="entry name" value="URIDINE 5'-MONOPHOSPHATE SYNTHASE"/>
    <property type="match status" value="1"/>
</dbReference>
<dbReference type="Pfam" id="PF00156">
    <property type="entry name" value="Pribosyltran"/>
    <property type="match status" value="1"/>
</dbReference>
<dbReference type="SUPFAM" id="SSF53271">
    <property type="entry name" value="PRTase-like"/>
    <property type="match status" value="1"/>
</dbReference>
<dbReference type="PROSITE" id="PS00103">
    <property type="entry name" value="PUR_PYR_PR_TRANSFER"/>
    <property type="match status" value="1"/>
</dbReference>
<name>PYRE_CALS8</name>
<feature type="chain" id="PRO_1000138767" description="Orotate phosphoribosyltransferase">
    <location>
        <begin position="1"/>
        <end position="191"/>
    </location>
</feature>
<feature type="binding site" evidence="1">
    <location>
        <begin position="114"/>
        <end position="122"/>
    </location>
    <ligand>
        <name>5-phospho-alpha-D-ribose 1-diphosphate</name>
        <dbReference type="ChEBI" id="CHEBI:58017"/>
    </ligand>
</feature>
<feature type="binding site" evidence="1">
    <location>
        <position position="118"/>
    </location>
    <ligand>
        <name>orotate</name>
        <dbReference type="ChEBI" id="CHEBI:30839"/>
    </ligand>
</feature>
<feature type="binding site" evidence="1">
    <location>
        <position position="146"/>
    </location>
    <ligand>
        <name>orotate</name>
        <dbReference type="ChEBI" id="CHEBI:30839"/>
    </ligand>
</feature>
<organism>
    <name type="scientific">Caldicellulosiruptor saccharolyticus (strain ATCC 43494 / DSM 8903 / Tp8T 6331)</name>
    <dbReference type="NCBI Taxonomy" id="351627"/>
    <lineage>
        <taxon>Bacteria</taxon>
        <taxon>Bacillati</taxon>
        <taxon>Bacillota</taxon>
        <taxon>Bacillota incertae sedis</taxon>
        <taxon>Caldicellulosiruptorales</taxon>
        <taxon>Caldicellulosiruptoraceae</taxon>
        <taxon>Caldicellulosiruptor</taxon>
    </lineage>
</organism>